<comment type="function">
    <text evidence="2">Water channel required to facilitate the transport of water across membranes (PubMed:21352231). In addition to water, also shows strong ammonium transport activity (PubMed:21352231). Also enables low but statistically significant glycerol and urea permeability (PubMed:21352231). May be involved in fungal nitrogen (ammonium) support of the plant host in symbiosis (PubMed:21352231).</text>
</comment>
<comment type="catalytic activity">
    <reaction evidence="2">
        <text>H2O(in) = H2O(out)</text>
        <dbReference type="Rhea" id="RHEA:29667"/>
        <dbReference type="ChEBI" id="CHEBI:15377"/>
    </reaction>
</comment>
<comment type="catalytic activity">
    <reaction evidence="2">
        <text>NH4(+)(in) = NH4(+)(out)</text>
        <dbReference type="Rhea" id="RHEA:28747"/>
        <dbReference type="ChEBI" id="CHEBI:28938"/>
    </reaction>
</comment>
<comment type="catalytic activity">
    <reaction evidence="2">
        <text>urea(in) = urea(out)</text>
        <dbReference type="Rhea" id="RHEA:32799"/>
        <dbReference type="ChEBI" id="CHEBI:16199"/>
    </reaction>
</comment>
<comment type="catalytic activity">
    <reaction evidence="2">
        <text>glycerol(in) = glycerol(out)</text>
        <dbReference type="Rhea" id="RHEA:29675"/>
        <dbReference type="ChEBI" id="CHEBI:17754"/>
    </reaction>
</comment>
<comment type="subcellular location">
    <subcellularLocation>
        <location evidence="1">Membrane</location>
        <topology evidence="1">Multi-pass membrane protein</topology>
    </subcellularLocation>
</comment>
<comment type="induction">
    <text evidence="2">Expression is reduced fourfold during ectomycorrhiza formation (PubMed:21352231). Expression is highest at 15 degrees Celsius and decreases at any other temperature (PubMed:21352231).</text>
</comment>
<comment type="domain">
    <text evidence="5">Aquaporins contain two tandem repeats each containing three membrane-spanning domains and a pore-forming loop with the signature motif Asn-Pro-Ala (NPA) (Probable). Lacbi1:387054 has NPC/NTA motifs which is in accordance with the fungal aquaporins (NPx and NxA) (Probable).</text>
</comment>
<comment type="similarity">
    <text evidence="4">Belongs to the MIP/aquaporin (TC 1.A.8) family.</text>
</comment>
<comment type="sequence caution" evidence="4">
    <conflict type="erroneous gene model prediction">
        <sequence resource="EMBL-CDS" id="EDR08508"/>
    </conflict>
</comment>
<dbReference type="EMBL" id="DS547101">
    <property type="protein sequence ID" value="EDR08508.1"/>
    <property type="status" value="ALT_SEQ"/>
    <property type="molecule type" value="Genomic_DNA"/>
</dbReference>
<dbReference type="RefSeq" id="XP_001880733.1">
    <property type="nucleotide sequence ID" value="XM_001880698.1"/>
</dbReference>
<dbReference type="SMR" id="B0DAC6"/>
<dbReference type="STRING" id="486041.B0DAC6"/>
<dbReference type="GeneID" id="6076254"/>
<dbReference type="KEGG" id="lbc:LACBIDRAFT_145071"/>
<dbReference type="HOGENOM" id="CLU_020019_6_1_1"/>
<dbReference type="InParanoid" id="B0DAC6"/>
<dbReference type="OrthoDB" id="3222at2759"/>
<dbReference type="Proteomes" id="UP000001194">
    <property type="component" value="Unassembled WGS sequence"/>
</dbReference>
<dbReference type="GO" id="GO:0005886">
    <property type="term" value="C:plasma membrane"/>
    <property type="evidence" value="ECO:0007669"/>
    <property type="project" value="TreeGrafter"/>
</dbReference>
<dbReference type="GO" id="GO:0015254">
    <property type="term" value="F:glycerol channel activity"/>
    <property type="evidence" value="ECO:0007669"/>
    <property type="project" value="TreeGrafter"/>
</dbReference>
<dbReference type="GO" id="GO:0015250">
    <property type="term" value="F:water channel activity"/>
    <property type="evidence" value="ECO:0007669"/>
    <property type="project" value="TreeGrafter"/>
</dbReference>
<dbReference type="Gene3D" id="1.20.1080.10">
    <property type="entry name" value="Glycerol uptake facilitator protein"/>
    <property type="match status" value="1"/>
</dbReference>
<dbReference type="InterPro" id="IPR023271">
    <property type="entry name" value="Aquaporin-like"/>
</dbReference>
<dbReference type="InterPro" id="IPR000425">
    <property type="entry name" value="MIP"/>
</dbReference>
<dbReference type="InterPro" id="IPR050363">
    <property type="entry name" value="MIP/Aquaporin"/>
</dbReference>
<dbReference type="PANTHER" id="PTHR43829:SF14">
    <property type="entry name" value="AQUAPORIN 3"/>
    <property type="match status" value="1"/>
</dbReference>
<dbReference type="PANTHER" id="PTHR43829">
    <property type="entry name" value="AQUAPORIN OR AQUAGLYCEROPORIN RELATED"/>
    <property type="match status" value="1"/>
</dbReference>
<dbReference type="Pfam" id="PF00230">
    <property type="entry name" value="MIP"/>
    <property type="match status" value="1"/>
</dbReference>
<dbReference type="PRINTS" id="PR00783">
    <property type="entry name" value="MINTRINSICP"/>
</dbReference>
<dbReference type="SUPFAM" id="SSF81338">
    <property type="entry name" value="Aquaporin-like"/>
    <property type="match status" value="1"/>
</dbReference>
<proteinExistence type="evidence at protein level"/>
<gene>
    <name type="ORF">Lacbi1:387054</name>
    <name type="ORF">LACBIDRAFT_145071</name>
</gene>
<name>AQP4_LACBS</name>
<organism>
    <name type="scientific">Laccaria bicolor (strain S238N-H82 / ATCC MYA-4686)</name>
    <name type="common">Bicoloured deceiver</name>
    <name type="synonym">Laccaria laccata var. bicolor</name>
    <dbReference type="NCBI Taxonomy" id="486041"/>
    <lineage>
        <taxon>Eukaryota</taxon>
        <taxon>Fungi</taxon>
        <taxon>Dikarya</taxon>
        <taxon>Basidiomycota</taxon>
        <taxon>Agaricomycotina</taxon>
        <taxon>Agaricomycetes</taxon>
        <taxon>Agaricomycetidae</taxon>
        <taxon>Agaricales</taxon>
        <taxon>Agaricineae</taxon>
        <taxon>Hydnangiaceae</taxon>
        <taxon>Laccaria</taxon>
    </lineage>
</organism>
<evidence type="ECO:0000255" key="1"/>
<evidence type="ECO:0000269" key="2">
    <source>
    </source>
</evidence>
<evidence type="ECO:0000303" key="3">
    <source>
    </source>
</evidence>
<evidence type="ECO:0000305" key="4"/>
<evidence type="ECO:0000305" key="5">
    <source>
    </source>
</evidence>
<sequence>MSNAPLVHLSDLQKRLRVFAVWEKVRNDGKVHWAIECFAEMFGVFLYVYFGLGSTAGWVIGNIIKETNLSSILQIGLAYAFGIWFAIGLCSSSSGGHFNPCVTLSFVVFKGFPKLKACRYIIAQILGAYIASALVYSQWNVLIEECTLGLIKAKAYDTTMFTPNGPAGIFALYLVPGAQSVPRALLNEFVNSTLIGMIIWAALDPTNMMVPPAMGPLFISLAYAAVIWGFATPAVALNTARDLGARLFAMSIWGTKAAGSGYSAIACLINIPATLLGVFLYEVFFTDSDRGKLLPILNGKKLKHIFS</sequence>
<protein>
    <recommendedName>
        <fullName evidence="3">Aquaporin Lacbi1:387054</fullName>
    </recommendedName>
</protein>
<accession>B0DAC6</accession>
<keyword id="KW-0472">Membrane</keyword>
<keyword id="KW-1185">Reference proteome</keyword>
<keyword id="KW-0677">Repeat</keyword>
<keyword id="KW-0812">Transmembrane</keyword>
<keyword id="KW-1133">Transmembrane helix</keyword>
<keyword id="KW-0813">Transport</keyword>
<reference key="1">
    <citation type="journal article" date="2008" name="Nature">
        <title>The genome of Laccaria bicolor provides insights into mycorrhizal symbiosis.</title>
        <authorList>
            <person name="Martin F."/>
            <person name="Aerts A."/>
            <person name="Ahren D."/>
            <person name="Brun A."/>
            <person name="Danchin E.G.J."/>
            <person name="Duchaussoy F."/>
            <person name="Gibon J."/>
            <person name="Kohler A."/>
            <person name="Lindquist E."/>
            <person name="Pereda V."/>
            <person name="Salamov A."/>
            <person name="Shapiro H.J."/>
            <person name="Wuyts J."/>
            <person name="Blaudez D."/>
            <person name="Buee M."/>
            <person name="Brokstein P."/>
            <person name="Canbaeck B."/>
            <person name="Cohen D."/>
            <person name="Courty P.E."/>
            <person name="Coutinho P.M."/>
            <person name="Delaruelle C."/>
            <person name="Detter J.C."/>
            <person name="Deveau A."/>
            <person name="DiFazio S."/>
            <person name="Duplessis S."/>
            <person name="Fraissinet-Tachet L."/>
            <person name="Lucic E."/>
            <person name="Frey-Klett P."/>
            <person name="Fourrey C."/>
            <person name="Feussner I."/>
            <person name="Gay G."/>
            <person name="Grimwood J."/>
            <person name="Hoegger P.J."/>
            <person name="Jain P."/>
            <person name="Kilaru S."/>
            <person name="Labbe J."/>
            <person name="Lin Y.C."/>
            <person name="Legue V."/>
            <person name="Le Tacon F."/>
            <person name="Marmeisse R."/>
            <person name="Melayah D."/>
            <person name="Montanini B."/>
            <person name="Muratet M."/>
            <person name="Nehls U."/>
            <person name="Niculita-Hirzel H."/>
            <person name="Oudot-Le Secq M.P."/>
            <person name="Peter M."/>
            <person name="Quesneville H."/>
            <person name="Rajashekar B."/>
            <person name="Reich M."/>
            <person name="Rouhier N."/>
            <person name="Schmutz J."/>
            <person name="Yin T."/>
            <person name="Chalot M."/>
            <person name="Henrissat B."/>
            <person name="Kuees U."/>
            <person name="Lucas S."/>
            <person name="Van de Peer Y."/>
            <person name="Podila G.K."/>
            <person name="Polle A."/>
            <person name="Pukkila P.J."/>
            <person name="Richardson P.M."/>
            <person name="Rouze P."/>
            <person name="Sanders I.R."/>
            <person name="Stajich J.E."/>
            <person name="Tunlid A."/>
            <person name="Tuskan G."/>
            <person name="Grigoriev I.V."/>
        </authorList>
    </citation>
    <scope>NUCLEOTIDE SEQUENCE [LARGE SCALE GENOMIC DNA]</scope>
    <source>
        <strain>S238N-H82 / ATCC MYA-4686</strain>
    </source>
</reference>
<reference key="2">
    <citation type="journal article" date="2011" name="New Phytol.">
        <title>The aquaporin gene family of the ectomycorrhizal fungus Laccaria bicolor: lessons for symbiotic functions.</title>
        <authorList>
            <person name="Dietz S."/>
            <person name="von Buelow J."/>
            <person name="Beitz E."/>
            <person name="Nehls U."/>
        </authorList>
    </citation>
    <scope>FUNCTION</scope>
    <scope>DOMAIN</scope>
    <scope>TOPOLOGY</scope>
    <scope>TRANSPORTER ACTIVITY</scope>
    <scope>INDUCTION</scope>
</reference>
<feature type="chain" id="PRO_0000457455" description="Aquaporin Lacbi1:387054">
    <location>
        <begin position="1"/>
        <end position="307"/>
    </location>
</feature>
<feature type="topological domain" description="Cytoplasmic" evidence="5">
    <location>
        <begin position="1"/>
        <end position="40"/>
    </location>
</feature>
<feature type="transmembrane region" description="Helical" evidence="1">
    <location>
        <begin position="41"/>
        <end position="61"/>
    </location>
</feature>
<feature type="topological domain" description="Extracellular" evidence="5">
    <location>
        <begin position="62"/>
        <end position="68"/>
    </location>
</feature>
<feature type="transmembrane region" description="Helical" evidence="1">
    <location>
        <begin position="69"/>
        <end position="89"/>
    </location>
</feature>
<feature type="topological domain" description="Cytoplasmic" evidence="5">
    <location>
        <begin position="90"/>
        <end position="120"/>
    </location>
</feature>
<feature type="transmembrane region" description="Helical" evidence="1">
    <location>
        <begin position="121"/>
        <end position="141"/>
    </location>
</feature>
<feature type="topological domain" description="Extracellular" evidence="5">
    <location>
        <begin position="142"/>
        <end position="157"/>
    </location>
</feature>
<feature type="transmembrane region" description="Helical" evidence="1">
    <location>
        <begin position="158"/>
        <end position="178"/>
    </location>
</feature>
<feature type="topological domain" description="Cytoplasmic" evidence="5">
    <location>
        <begin position="179"/>
        <end position="183"/>
    </location>
</feature>
<feature type="transmembrane region" description="Helical" evidence="1">
    <location>
        <begin position="184"/>
        <end position="203"/>
    </location>
</feature>
<feature type="topological domain" description="Extracellular" evidence="5">
    <location>
        <begin position="204"/>
        <end position="216"/>
    </location>
</feature>
<feature type="transmembrane region" description="Helical" evidence="1">
    <location>
        <begin position="217"/>
        <end position="237"/>
    </location>
</feature>
<feature type="topological domain" description="Cytoplasmic" evidence="5">
    <location>
        <begin position="238"/>
        <end position="264"/>
    </location>
</feature>
<feature type="transmembrane region" description="Helical" evidence="1">
    <location>
        <begin position="265"/>
        <end position="285"/>
    </location>
</feature>
<feature type="topological domain" description="Extracellular" evidence="5">
    <location>
        <begin position="286"/>
        <end position="307"/>
    </location>
</feature>
<feature type="short sequence motif" description="NPA 1" evidence="5">
    <location>
        <begin position="99"/>
        <end position="101"/>
    </location>
</feature>
<feature type="short sequence motif" description="NPA 2" evidence="5">
    <location>
        <begin position="167"/>
        <end position="169"/>
    </location>
</feature>